<proteinExistence type="evidence at transcript level"/>
<feature type="chain" id="PRO_0000271236" description="Achaete-scute homolog 1b">
    <location>
        <begin position="1"/>
        <end position="195"/>
    </location>
</feature>
<feature type="domain" description="bHLH" evidence="3">
    <location>
        <begin position="66"/>
        <end position="118"/>
    </location>
</feature>
<feature type="region of interest" description="Disordered" evidence="4">
    <location>
        <begin position="141"/>
        <end position="164"/>
    </location>
</feature>
<gene>
    <name evidence="11" type="primary">ascl1b</name>
    <name evidence="9" type="synonym">ash</name>
    <name evidence="11" type="synonym">ashb</name>
</gene>
<protein>
    <recommendedName>
        <fullName>Achaete-scute homolog 1b</fullName>
        <shortName>Zash-1b</shortName>
    </recommendedName>
</protein>
<keyword id="KW-0217">Developmental protein</keyword>
<keyword id="KW-0221">Differentiation</keyword>
<keyword id="KW-0238">DNA-binding</keyword>
<keyword id="KW-0524">Neurogenesis</keyword>
<keyword id="KW-0539">Nucleus</keyword>
<keyword id="KW-1185">Reference proteome</keyword>
<keyword id="KW-0804">Transcription</keyword>
<keyword id="KW-0805">Transcription regulation</keyword>
<sequence>MEATVVATTQLTQDSFYQPFSESLEKQDRECKVLKRQRSSSPELLRCKRRLTFNGLGYTIPQQQPMAVARRNERERNRVKQVNMGFQTLRQHVPNGAANKKMSKVETLRSAVEYIRALQQLLDEHDAVSAVLQCGVPSPSVSNAYSAGPESPHSAYSSDEGSYEHLSSEEQELLDFTTWFDRYESGASMATKDWC</sequence>
<accession>Q90260</accession>
<organism>
    <name type="scientific">Danio rerio</name>
    <name type="common">Zebrafish</name>
    <name type="synonym">Brachydanio rerio</name>
    <dbReference type="NCBI Taxonomy" id="7955"/>
    <lineage>
        <taxon>Eukaryota</taxon>
        <taxon>Metazoa</taxon>
        <taxon>Chordata</taxon>
        <taxon>Craniata</taxon>
        <taxon>Vertebrata</taxon>
        <taxon>Euteleostomi</taxon>
        <taxon>Actinopterygii</taxon>
        <taxon>Neopterygii</taxon>
        <taxon>Teleostei</taxon>
        <taxon>Ostariophysi</taxon>
        <taxon>Cypriniformes</taxon>
        <taxon>Danionidae</taxon>
        <taxon>Danioninae</taxon>
        <taxon>Danio</taxon>
    </lineage>
</organism>
<comment type="function">
    <text evidence="1 5">Transcriptional regulator. May mediate transcription activation by binding to the E box-containing promoter (By similarity). Involved in neurogenesis. Involved in maintaining rhombomere boundaries in the hindbrain, probably via up-regulation of delta expression. May mediate transcription activation by binding to the E box-containing promoter.</text>
</comment>
<comment type="subunit">
    <text evidence="2">Efficient DNA binding requires dimerization with another bHLH protein.</text>
</comment>
<comment type="subcellular location">
    <subcellularLocation>
        <location evidence="8">Nucleus</location>
    </subcellularLocation>
</comment>
<comment type="tissue specificity">
    <text evidence="5 6 7">In the 24 hours embryo, expressed in hindbrain close to the anterior and posterior boundaries of rhombomeres 2-6 and in ventral cells close to the floor plate of most rhombomeres. Also expressed in the telencephalon, diencephalon, tegmentum and spinal cord at sites distinct from those expressing ascl1a. Not expressed in the adenohypophysis.</text>
</comment>
<comment type="developmental stage">
    <text evidence="7">First detected at 10 hours post-fertilization (hpf) increasing over the next 24 hours, then decreasing between 48 and 72 hours. Not detected in adult.</text>
</comment>
<reference evidence="8 9" key="1">
    <citation type="journal article" date="1994" name="Dev. Biol.">
        <title>The expression pattern of two zebrafish achaete-scute homolog (ash) genes is altered in the embryonic brain of the cyclops mutant.</title>
        <authorList>
            <person name="Allende M.L."/>
            <person name="Weinberg E.S."/>
        </authorList>
    </citation>
    <scope>NUCLEOTIDE SEQUENCE [MRNA]</scope>
    <scope>DEVELOPMENTAL STAGE</scope>
    <scope>TISSUE SPECIFICITY</scope>
    <source>
        <tissue evidence="7">Embryo</tissue>
    </source>
</reference>
<reference evidence="10" key="2">
    <citation type="submission" date="2004-03" db="EMBL/GenBank/DDBJ databases">
        <authorList>
            <consortium name="NIH - Zebrafish Gene Collection (ZGC) project"/>
        </authorList>
    </citation>
    <scope>NUCLEOTIDE SEQUENCE [LARGE SCALE MRNA]</scope>
    <source>
        <tissue evidence="10">Embryo</tissue>
    </source>
</reference>
<reference evidence="8" key="3">
    <citation type="journal article" date="2005" name="Development">
        <title>Wnt1 regulates neurogenesis and mediates lateral inhibition of boundary cell specification in the zebrafish hindbrain.</title>
        <authorList>
            <person name="Amoyel M."/>
            <person name="Cheng Y.-C."/>
            <person name="Jiang Y.-J."/>
            <person name="Wilkinson D.G."/>
        </authorList>
    </citation>
    <scope>FUNCTION</scope>
    <scope>TISSUE SPECIFICITY</scope>
</reference>
<reference evidence="8" key="4">
    <citation type="journal article" date="2006" name="Development">
        <title>The proneural gene ascl1a is required for endocrine differentiation and cell survival in the zebrafish adenohypophysis.</title>
        <authorList>
            <person name="Pogoda H.-M."/>
            <person name="von der Hardt S."/>
            <person name="Herzog W."/>
            <person name="Kramer C."/>
            <person name="Schwarz H."/>
            <person name="Hammerschmidt M."/>
        </authorList>
    </citation>
    <scope>TISSUE SPECIFICITY</scope>
</reference>
<evidence type="ECO:0000250" key="1"/>
<evidence type="ECO:0000250" key="2">
    <source>
        <dbReference type="UniProtKB" id="P50553"/>
    </source>
</evidence>
<evidence type="ECO:0000255" key="3">
    <source>
        <dbReference type="PROSITE-ProRule" id="PRU00981"/>
    </source>
</evidence>
<evidence type="ECO:0000256" key="4">
    <source>
        <dbReference type="SAM" id="MobiDB-lite"/>
    </source>
</evidence>
<evidence type="ECO:0000269" key="5">
    <source>
    </source>
</evidence>
<evidence type="ECO:0000269" key="6">
    <source>
    </source>
</evidence>
<evidence type="ECO:0000269" key="7">
    <source>
    </source>
</evidence>
<evidence type="ECO:0000305" key="8"/>
<evidence type="ECO:0000312" key="9">
    <source>
        <dbReference type="EMBL" id="AAA78899.1"/>
    </source>
</evidence>
<evidence type="ECO:0000312" key="10">
    <source>
        <dbReference type="EMBL" id="AAH67718.1"/>
    </source>
</evidence>
<evidence type="ECO:0000312" key="11">
    <source>
        <dbReference type="ZFIN" id="ZDB-GENE-980526-174"/>
    </source>
</evidence>
<dbReference type="EMBL" id="U14590">
    <property type="protein sequence ID" value="AAA78899.1"/>
    <property type="molecule type" value="mRNA"/>
</dbReference>
<dbReference type="EMBL" id="BC067718">
    <property type="protein sequence ID" value="AAH67718.1"/>
    <property type="molecule type" value="mRNA"/>
</dbReference>
<dbReference type="PIR" id="I50508">
    <property type="entry name" value="I50508"/>
</dbReference>
<dbReference type="RefSeq" id="NP_571306.1">
    <property type="nucleotide sequence ID" value="NM_131231.1"/>
</dbReference>
<dbReference type="SMR" id="Q90260"/>
<dbReference type="FunCoup" id="Q90260">
    <property type="interactions" value="7"/>
</dbReference>
<dbReference type="STRING" id="7955.ENSDARP00000022655"/>
<dbReference type="DNASU" id="30478"/>
<dbReference type="Ensembl" id="ENSDART00000019446">
    <property type="protein sequence ID" value="ENSDARP00000022655"/>
    <property type="gene ID" value="ENSDARG00000101628"/>
</dbReference>
<dbReference type="GeneID" id="30478"/>
<dbReference type="KEGG" id="dre:30478"/>
<dbReference type="AGR" id="ZFIN:ZDB-GENE-980526-174"/>
<dbReference type="CTD" id="30478"/>
<dbReference type="ZFIN" id="ZDB-GENE-980526-174">
    <property type="gene designation" value="ascl1b"/>
</dbReference>
<dbReference type="HOGENOM" id="CLU_063523_3_1_1"/>
<dbReference type="InParanoid" id="Q90260"/>
<dbReference type="OMA" id="VPAVHPN"/>
<dbReference type="OrthoDB" id="5976910at2759"/>
<dbReference type="PhylomeDB" id="Q90260"/>
<dbReference type="TreeFam" id="TF322889"/>
<dbReference type="PRO" id="PR:Q90260"/>
<dbReference type="Proteomes" id="UP000000437">
    <property type="component" value="Chromosome 7"/>
</dbReference>
<dbReference type="Bgee" id="ENSDARG00000101628">
    <property type="expression patterns" value="Expressed in hindbrain and 39 other cell types or tissues"/>
</dbReference>
<dbReference type="GO" id="GO:0005634">
    <property type="term" value="C:nucleus"/>
    <property type="evidence" value="ECO:0000305"/>
    <property type="project" value="ZFIN"/>
</dbReference>
<dbReference type="GO" id="GO:0090575">
    <property type="term" value="C:RNA polymerase II transcription regulator complex"/>
    <property type="evidence" value="ECO:0000318"/>
    <property type="project" value="GO_Central"/>
</dbReference>
<dbReference type="GO" id="GO:0003700">
    <property type="term" value="F:DNA-binding transcription factor activity"/>
    <property type="evidence" value="ECO:0000303"/>
    <property type="project" value="ZFIN"/>
</dbReference>
<dbReference type="GO" id="GO:0000981">
    <property type="term" value="F:DNA-binding transcription factor activity, RNA polymerase II-specific"/>
    <property type="evidence" value="ECO:0000318"/>
    <property type="project" value="GO_Central"/>
</dbReference>
<dbReference type="GO" id="GO:0046983">
    <property type="term" value="F:protein dimerization activity"/>
    <property type="evidence" value="ECO:0007669"/>
    <property type="project" value="InterPro"/>
</dbReference>
<dbReference type="GO" id="GO:0000977">
    <property type="term" value="F:RNA polymerase II transcription regulatory region sequence-specific DNA binding"/>
    <property type="evidence" value="ECO:0000318"/>
    <property type="project" value="GO_Central"/>
</dbReference>
<dbReference type="GO" id="GO:0007420">
    <property type="term" value="P:brain development"/>
    <property type="evidence" value="ECO:0000270"/>
    <property type="project" value="ZFIN"/>
</dbReference>
<dbReference type="GO" id="GO:0043009">
    <property type="term" value="P:chordate embryonic development"/>
    <property type="evidence" value="ECO:0000270"/>
    <property type="project" value="ZFIN"/>
</dbReference>
<dbReference type="GO" id="GO:0031018">
    <property type="term" value="P:endocrine pancreas development"/>
    <property type="evidence" value="ECO:0000315"/>
    <property type="project" value="ZFIN"/>
</dbReference>
<dbReference type="GO" id="GO:0021575">
    <property type="term" value="P:hindbrain morphogenesis"/>
    <property type="evidence" value="ECO:0000315"/>
    <property type="project" value="UniProtKB"/>
</dbReference>
<dbReference type="GO" id="GO:0030182">
    <property type="term" value="P:neuron differentiation"/>
    <property type="evidence" value="ECO:0000318"/>
    <property type="project" value="GO_Central"/>
</dbReference>
<dbReference type="GO" id="GO:0045666">
    <property type="term" value="P:positive regulation of neuron differentiation"/>
    <property type="evidence" value="ECO:0000250"/>
    <property type="project" value="UniProtKB"/>
</dbReference>
<dbReference type="GO" id="GO:0045944">
    <property type="term" value="P:positive regulation of transcription by RNA polymerase II"/>
    <property type="evidence" value="ECO:0000318"/>
    <property type="project" value="GO_Central"/>
</dbReference>
<dbReference type="GO" id="GO:0050767">
    <property type="term" value="P:regulation of neurogenesis"/>
    <property type="evidence" value="ECO:0000318"/>
    <property type="project" value="GO_Central"/>
</dbReference>
<dbReference type="GO" id="GO:0007423">
    <property type="term" value="P:sensory organ development"/>
    <property type="evidence" value="ECO:0000318"/>
    <property type="project" value="GO_Central"/>
</dbReference>
<dbReference type="FunFam" id="4.10.280.10:FF:000029">
    <property type="entry name" value="Achaete-scute family bHLH transcription factor 1"/>
    <property type="match status" value="1"/>
</dbReference>
<dbReference type="Gene3D" id="4.10.280.10">
    <property type="entry name" value="Helix-loop-helix DNA-binding domain"/>
    <property type="match status" value="1"/>
</dbReference>
<dbReference type="InterPro" id="IPR011598">
    <property type="entry name" value="bHLH_dom"/>
</dbReference>
<dbReference type="InterPro" id="IPR036638">
    <property type="entry name" value="HLH_DNA-bd_sf"/>
</dbReference>
<dbReference type="InterPro" id="IPR015660">
    <property type="entry name" value="MASH1/Ascl1a-like"/>
</dbReference>
<dbReference type="PANTHER" id="PTHR13935:SF133">
    <property type="entry name" value="ACHAETE-SCUTE HOMOLOG 1B"/>
    <property type="match status" value="1"/>
</dbReference>
<dbReference type="PANTHER" id="PTHR13935">
    <property type="entry name" value="ACHAETE-SCUTE TRANSCRIPTION FACTOR-RELATED"/>
    <property type="match status" value="1"/>
</dbReference>
<dbReference type="Pfam" id="PF00010">
    <property type="entry name" value="HLH"/>
    <property type="match status" value="1"/>
</dbReference>
<dbReference type="SMART" id="SM00353">
    <property type="entry name" value="HLH"/>
    <property type="match status" value="1"/>
</dbReference>
<dbReference type="SUPFAM" id="SSF47459">
    <property type="entry name" value="HLH, helix-loop-helix DNA-binding domain"/>
    <property type="match status" value="1"/>
</dbReference>
<dbReference type="PROSITE" id="PS50888">
    <property type="entry name" value="BHLH"/>
    <property type="match status" value="1"/>
</dbReference>
<name>ASL1B_DANRE</name>